<protein>
    <recommendedName>
        <fullName>Homeobox protein HMX3</fullName>
    </recommendedName>
    <alternativeName>
        <fullName>Homeobox protein H6 family member 3</fullName>
    </alternativeName>
    <alternativeName>
        <fullName>Homeobox protein Nkx-5.1</fullName>
    </alternativeName>
</protein>
<feature type="chain" id="PRO_0000341388" description="Homeobox protein HMX3">
    <location>
        <begin position="1"/>
        <end position="306"/>
    </location>
</feature>
<feature type="DNA-binding region" description="Homeobox" evidence="2">
    <location>
        <begin position="178"/>
        <end position="237"/>
    </location>
</feature>
<feature type="region of interest" description="Disordered" evidence="3">
    <location>
        <begin position="95"/>
        <end position="181"/>
    </location>
</feature>
<feature type="compositionally biased region" description="Basic and acidic residues" evidence="3">
    <location>
        <begin position="117"/>
        <end position="143"/>
    </location>
</feature>
<feature type="compositionally biased region" description="Basic and acidic residues" evidence="3">
    <location>
        <begin position="153"/>
        <end position="174"/>
    </location>
</feature>
<reference key="1">
    <citation type="submission" date="2006-08" db="EMBL/GenBank/DDBJ databases">
        <authorList>
            <consortium name="NIH - Xenopus Gene Collection (XGC) project"/>
        </authorList>
    </citation>
    <scope>NUCLEOTIDE SEQUENCE [LARGE SCALE MRNA]</scope>
    <source>
        <tissue>Brain</tissue>
    </source>
</reference>
<name>HMX3_XENTR</name>
<proteinExistence type="evidence at transcript level"/>
<comment type="function">
    <text evidence="1">Transcription factor involved in specification of neuronal cell types and which is required for inner ear and hypothalamus development. Binds to the 5'-CAAGTG-3' core sequence. May act as a stage-specific inhibitor of anf1 in the anterior neural plate during the development (By similarity).</text>
</comment>
<comment type="subcellular location">
    <subcellularLocation>
        <location evidence="2">Nucleus</location>
    </subcellularLocation>
</comment>
<comment type="similarity">
    <text evidence="4">Belongs to the HMX homeobox family.</text>
</comment>
<dbReference type="EMBL" id="BC121874">
    <property type="protein sequence ID" value="AAI21875.1"/>
    <property type="molecule type" value="mRNA"/>
</dbReference>
<dbReference type="RefSeq" id="NP_001072829.1">
    <property type="nucleotide sequence ID" value="NM_001079361.1"/>
</dbReference>
<dbReference type="SMR" id="Q0P4W6"/>
<dbReference type="FunCoup" id="Q0P4W6">
    <property type="interactions" value="1182"/>
</dbReference>
<dbReference type="STRING" id="8364.ENSXETP00000038802"/>
<dbReference type="PaxDb" id="8364-ENSXETP00000021090"/>
<dbReference type="DNASU" id="780290"/>
<dbReference type="GeneID" id="780290"/>
<dbReference type="KEGG" id="xtr:780290"/>
<dbReference type="AGR" id="Xenbase:XB-GENE-483776"/>
<dbReference type="CTD" id="340784"/>
<dbReference type="Xenbase" id="XB-GENE-483776">
    <property type="gene designation" value="hmx3"/>
</dbReference>
<dbReference type="eggNOG" id="KOG0485">
    <property type="taxonomic scope" value="Eukaryota"/>
</dbReference>
<dbReference type="HOGENOM" id="CLU_064096_0_0_1"/>
<dbReference type="InParanoid" id="Q0P4W6"/>
<dbReference type="OMA" id="DKKPACR"/>
<dbReference type="OrthoDB" id="6159439at2759"/>
<dbReference type="PhylomeDB" id="Q0P4W6"/>
<dbReference type="TreeFam" id="TF320562"/>
<dbReference type="Proteomes" id="UP000008143">
    <property type="component" value="Chromosome 7"/>
</dbReference>
<dbReference type="Bgee" id="ENSXETG00000009562">
    <property type="expression patterns" value="Expressed in neurula embryo and 4 other cell types or tissues"/>
</dbReference>
<dbReference type="GO" id="GO:0005634">
    <property type="term" value="C:nucleus"/>
    <property type="evidence" value="ECO:0007669"/>
    <property type="project" value="UniProtKB-SubCell"/>
</dbReference>
<dbReference type="GO" id="GO:0003677">
    <property type="term" value="F:DNA binding"/>
    <property type="evidence" value="ECO:0007669"/>
    <property type="project" value="UniProtKB-KW"/>
</dbReference>
<dbReference type="GO" id="GO:0000981">
    <property type="term" value="F:DNA-binding transcription factor activity, RNA polymerase II-specific"/>
    <property type="evidence" value="ECO:0007669"/>
    <property type="project" value="InterPro"/>
</dbReference>
<dbReference type="GO" id="GO:0030154">
    <property type="term" value="P:cell differentiation"/>
    <property type="evidence" value="ECO:0007669"/>
    <property type="project" value="UniProtKB-KW"/>
</dbReference>
<dbReference type="GO" id="GO:0007399">
    <property type="term" value="P:nervous system development"/>
    <property type="evidence" value="ECO:0007669"/>
    <property type="project" value="UniProtKB-KW"/>
</dbReference>
<dbReference type="CDD" id="cd00086">
    <property type="entry name" value="homeodomain"/>
    <property type="match status" value="1"/>
</dbReference>
<dbReference type="FunFam" id="1.10.10.60:FF:000053">
    <property type="entry name" value="H6 family homeobox 2"/>
    <property type="match status" value="1"/>
</dbReference>
<dbReference type="Gene3D" id="1.10.10.60">
    <property type="entry name" value="Homeodomain-like"/>
    <property type="match status" value="1"/>
</dbReference>
<dbReference type="InterPro" id="IPR001356">
    <property type="entry name" value="HD"/>
</dbReference>
<dbReference type="InterPro" id="IPR020479">
    <property type="entry name" value="HD_metazoa"/>
</dbReference>
<dbReference type="InterPro" id="IPR051300">
    <property type="entry name" value="HMX_Homeobox_TF"/>
</dbReference>
<dbReference type="InterPro" id="IPR017970">
    <property type="entry name" value="Homeobox_CS"/>
</dbReference>
<dbReference type="InterPro" id="IPR009057">
    <property type="entry name" value="Homeodomain-like_sf"/>
</dbReference>
<dbReference type="PANTHER" id="PTHR46110">
    <property type="entry name" value="HOMEOBOX PROTEIN HMX"/>
    <property type="match status" value="1"/>
</dbReference>
<dbReference type="PANTHER" id="PTHR46110:SF2">
    <property type="entry name" value="HOMEOBOX PROTEIN HMX3"/>
    <property type="match status" value="1"/>
</dbReference>
<dbReference type="Pfam" id="PF00046">
    <property type="entry name" value="Homeodomain"/>
    <property type="match status" value="1"/>
</dbReference>
<dbReference type="PRINTS" id="PR00024">
    <property type="entry name" value="HOMEOBOX"/>
</dbReference>
<dbReference type="SMART" id="SM00389">
    <property type="entry name" value="HOX"/>
    <property type="match status" value="1"/>
</dbReference>
<dbReference type="SUPFAM" id="SSF46689">
    <property type="entry name" value="Homeodomain-like"/>
    <property type="match status" value="1"/>
</dbReference>
<dbReference type="PROSITE" id="PS00027">
    <property type="entry name" value="HOMEOBOX_1"/>
    <property type="match status" value="1"/>
</dbReference>
<dbReference type="PROSITE" id="PS50071">
    <property type="entry name" value="HOMEOBOX_2"/>
    <property type="match status" value="1"/>
</dbReference>
<keyword id="KW-0217">Developmental protein</keyword>
<keyword id="KW-0221">Differentiation</keyword>
<keyword id="KW-0238">DNA-binding</keyword>
<keyword id="KW-0371">Homeobox</keyword>
<keyword id="KW-0524">Neurogenesis</keyword>
<keyword id="KW-0539">Nucleus</keyword>
<keyword id="KW-1185">Reference proteome</keyword>
<keyword id="KW-0804">Transcription</keyword>
<keyword id="KW-0805">Transcription regulation</keyword>
<organism>
    <name type="scientific">Xenopus tropicalis</name>
    <name type="common">Western clawed frog</name>
    <name type="synonym">Silurana tropicalis</name>
    <dbReference type="NCBI Taxonomy" id="8364"/>
    <lineage>
        <taxon>Eukaryota</taxon>
        <taxon>Metazoa</taxon>
        <taxon>Chordata</taxon>
        <taxon>Craniata</taxon>
        <taxon>Vertebrata</taxon>
        <taxon>Euteleostomi</taxon>
        <taxon>Amphibia</taxon>
        <taxon>Batrachia</taxon>
        <taxon>Anura</taxon>
        <taxon>Pipoidea</taxon>
        <taxon>Pipidae</taxon>
        <taxon>Xenopodinae</taxon>
        <taxon>Xenopus</taxon>
        <taxon>Silurana</taxon>
    </lineage>
</organism>
<sequence>MPETGQESSNPPAKESPFSIKSLLTCEPSRAVRPHKALFTPIKGALDGAAFALSPLTDLTFPRLEIPAQRFALPAHYLERSPAWWYSYTLAHGGHTPRTEVPDKSLLLGPTSPVSGGERDSPEPIHPLKAELEAKDSESKSPEEIILEESEPEEGKKDDSGEDWKKREESPDKKPCRKKKTRTVFSRSQVFQLESTFDMKRYLSSSERAGLAASLHLTETQVKIWFQNRRNKWKRQLAAELEAANLSHAAAQRIVRVPILYHENSSSAESASSAANVPVSQPLLTFPHPVYYSHPVVTSVPLLRPV</sequence>
<accession>Q0P4W6</accession>
<evidence type="ECO:0000250" key="1"/>
<evidence type="ECO:0000255" key="2">
    <source>
        <dbReference type="PROSITE-ProRule" id="PRU00108"/>
    </source>
</evidence>
<evidence type="ECO:0000256" key="3">
    <source>
        <dbReference type="SAM" id="MobiDB-lite"/>
    </source>
</evidence>
<evidence type="ECO:0000305" key="4"/>
<gene>
    <name type="primary">hmx3</name>
    <name type="synonym">nkx-5.1</name>
    <name type="synonym">nkx5-1</name>
</gene>